<keyword id="KW-0378">Hydrolase</keyword>
<keyword id="KW-0460">Magnesium</keyword>
<keyword id="KW-0479">Metal-binding</keyword>
<name>NUDK_SALTI</name>
<gene>
    <name type="primary">nudK</name>
    <name type="ordered locus">STY2714</name>
    <name type="ordered locus">t0382</name>
</gene>
<reference key="1">
    <citation type="journal article" date="2001" name="Nature">
        <title>Complete genome sequence of a multiple drug resistant Salmonella enterica serovar Typhi CT18.</title>
        <authorList>
            <person name="Parkhill J."/>
            <person name="Dougan G."/>
            <person name="James K.D."/>
            <person name="Thomson N.R."/>
            <person name="Pickard D."/>
            <person name="Wain J."/>
            <person name="Churcher C.M."/>
            <person name="Mungall K.L."/>
            <person name="Bentley S.D."/>
            <person name="Holden M.T.G."/>
            <person name="Sebaihia M."/>
            <person name="Baker S."/>
            <person name="Basham D."/>
            <person name="Brooks K."/>
            <person name="Chillingworth T."/>
            <person name="Connerton P."/>
            <person name="Cronin A."/>
            <person name="Davis P."/>
            <person name="Davies R.M."/>
            <person name="Dowd L."/>
            <person name="White N."/>
            <person name="Farrar J."/>
            <person name="Feltwell T."/>
            <person name="Hamlin N."/>
            <person name="Haque A."/>
            <person name="Hien T.T."/>
            <person name="Holroyd S."/>
            <person name="Jagels K."/>
            <person name="Krogh A."/>
            <person name="Larsen T.S."/>
            <person name="Leather S."/>
            <person name="Moule S."/>
            <person name="O'Gaora P."/>
            <person name="Parry C."/>
            <person name="Quail M.A."/>
            <person name="Rutherford K.M."/>
            <person name="Simmonds M."/>
            <person name="Skelton J."/>
            <person name="Stevens K."/>
            <person name="Whitehead S."/>
            <person name="Barrell B.G."/>
        </authorList>
    </citation>
    <scope>NUCLEOTIDE SEQUENCE [LARGE SCALE GENOMIC DNA]</scope>
    <source>
        <strain>CT18</strain>
    </source>
</reference>
<reference key="2">
    <citation type="journal article" date="2003" name="J. Bacteriol.">
        <title>Comparative genomics of Salmonella enterica serovar Typhi strains Ty2 and CT18.</title>
        <authorList>
            <person name="Deng W."/>
            <person name="Liou S.-R."/>
            <person name="Plunkett G. III"/>
            <person name="Mayhew G.F."/>
            <person name="Rose D.J."/>
            <person name="Burland V."/>
            <person name="Kodoyianni V."/>
            <person name="Schwartz D.C."/>
            <person name="Blattner F.R."/>
        </authorList>
    </citation>
    <scope>NUCLEOTIDE SEQUENCE [LARGE SCALE GENOMIC DNA]</scope>
    <source>
        <strain>ATCC 700931 / Ty2</strain>
    </source>
</reference>
<feature type="chain" id="PRO_0000342497" description="GDP-mannose pyrophosphatase">
    <location>
        <begin position="1"/>
        <end position="191"/>
    </location>
</feature>
<feature type="domain" description="Nudix hydrolase" evidence="2">
    <location>
        <begin position="43"/>
        <end position="180"/>
    </location>
</feature>
<feature type="short sequence motif" description="Nudix box">
    <location>
        <begin position="86"/>
        <end position="106"/>
    </location>
</feature>
<feature type="binding site" description="in other chain" evidence="1">
    <location>
        <position position="17"/>
    </location>
    <ligand>
        <name>GDP-alpha-D-mannose</name>
        <dbReference type="ChEBI" id="CHEBI:57527"/>
        <note>ligand shared between dimeric partners</note>
    </ligand>
</feature>
<feature type="binding site" evidence="1">
    <location>
        <begin position="38"/>
        <end position="40"/>
    </location>
    <ligand>
        <name>GDP-alpha-D-mannose</name>
        <dbReference type="ChEBI" id="CHEBI:57527"/>
        <note>ligand shared between dimeric partners</note>
    </ligand>
</feature>
<feature type="binding site" description="in other chain" evidence="1">
    <location>
        <position position="67"/>
    </location>
    <ligand>
        <name>GDP-alpha-D-mannose</name>
        <dbReference type="ChEBI" id="CHEBI:57527"/>
        <note>ligand shared between dimeric partners</note>
    </ligand>
</feature>
<feature type="binding site" description="in other chain" evidence="1">
    <location>
        <begin position="85"/>
        <end position="87"/>
    </location>
    <ligand>
        <name>GDP-alpha-D-mannose</name>
        <dbReference type="ChEBI" id="CHEBI:57527"/>
        <note>ligand shared between dimeric partners</note>
    </ligand>
</feature>
<feature type="binding site" evidence="1">
    <location>
        <position position="85"/>
    </location>
    <ligand>
        <name>Mg(2+)</name>
        <dbReference type="ChEBI" id="CHEBI:18420"/>
        <label>1</label>
    </ligand>
</feature>
<feature type="binding site" evidence="1">
    <location>
        <position position="100"/>
    </location>
    <ligand>
        <name>Mg(2+)</name>
        <dbReference type="ChEBI" id="CHEBI:18420"/>
        <label>2</label>
    </ligand>
</feature>
<feature type="binding site" description="in other chain" evidence="1">
    <location>
        <position position="104"/>
    </location>
    <ligand>
        <name>GDP-alpha-D-mannose</name>
        <dbReference type="ChEBI" id="CHEBI:57527"/>
        <note>ligand shared between dimeric partners</note>
    </ligand>
</feature>
<feature type="binding site" evidence="1">
    <location>
        <position position="104"/>
    </location>
    <ligand>
        <name>Mg(2+)</name>
        <dbReference type="ChEBI" id="CHEBI:18420"/>
        <label>1</label>
    </ligand>
</feature>
<feature type="binding site" evidence="1">
    <location>
        <position position="104"/>
    </location>
    <ligand>
        <name>Mg(2+)</name>
        <dbReference type="ChEBI" id="CHEBI:18420"/>
        <label>2</label>
    </ligand>
</feature>
<feature type="binding site" description="in other chain" evidence="1">
    <location>
        <position position="127"/>
    </location>
    <ligand>
        <name>GDP-alpha-D-mannose</name>
        <dbReference type="ChEBI" id="CHEBI:57527"/>
        <note>ligand shared between dimeric partners</note>
    </ligand>
</feature>
<feature type="binding site" description="in other chain" evidence="1">
    <location>
        <begin position="150"/>
        <end position="151"/>
    </location>
    <ligand>
        <name>GDP-alpha-D-mannose</name>
        <dbReference type="ChEBI" id="CHEBI:57527"/>
        <note>ligand shared between dimeric partners</note>
    </ligand>
</feature>
<feature type="binding site" evidence="1">
    <location>
        <position position="151"/>
    </location>
    <ligand>
        <name>Mg(2+)</name>
        <dbReference type="ChEBI" id="CHEBI:18420"/>
        <label>2</label>
    </ligand>
</feature>
<feature type="binding site" description="in other chain" evidence="1">
    <location>
        <position position="176"/>
    </location>
    <ligand>
        <name>GDP-alpha-D-mannose</name>
        <dbReference type="ChEBI" id="CHEBI:57527"/>
        <note>ligand shared between dimeric partners</note>
    </ligand>
</feature>
<accession>Q8XG64</accession>
<accession>Q7AMJ2</accession>
<dbReference type="EC" id="3.6.1.-" evidence="1"/>
<dbReference type="EMBL" id="AL513382">
    <property type="protein sequence ID" value="CAD07707.1"/>
    <property type="molecule type" value="Genomic_DNA"/>
</dbReference>
<dbReference type="EMBL" id="AE014613">
    <property type="protein sequence ID" value="AAO68100.1"/>
    <property type="molecule type" value="Genomic_DNA"/>
</dbReference>
<dbReference type="RefSeq" id="NP_457011.1">
    <property type="nucleotide sequence ID" value="NC_003198.1"/>
</dbReference>
<dbReference type="RefSeq" id="WP_000084037.1">
    <property type="nucleotide sequence ID" value="NZ_WSUR01000058.1"/>
</dbReference>
<dbReference type="SMR" id="Q8XG64"/>
<dbReference type="STRING" id="220341.gene:17586611"/>
<dbReference type="KEGG" id="stt:t0382"/>
<dbReference type="KEGG" id="sty:STY2714"/>
<dbReference type="PATRIC" id="fig|220341.7.peg.2752"/>
<dbReference type="eggNOG" id="COG0494">
    <property type="taxonomic scope" value="Bacteria"/>
</dbReference>
<dbReference type="HOGENOM" id="CLU_062658_6_0_6"/>
<dbReference type="OMA" id="EQCIRNE"/>
<dbReference type="OrthoDB" id="5292471at2"/>
<dbReference type="Proteomes" id="UP000000541">
    <property type="component" value="Chromosome"/>
</dbReference>
<dbReference type="Proteomes" id="UP000002670">
    <property type="component" value="Chromosome"/>
</dbReference>
<dbReference type="GO" id="GO:0005829">
    <property type="term" value="C:cytosol"/>
    <property type="evidence" value="ECO:0007669"/>
    <property type="project" value="TreeGrafter"/>
</dbReference>
<dbReference type="GO" id="GO:0016818">
    <property type="term" value="F:hydrolase activity, acting on acid anhydrides, in phosphorus-containing anhydrides"/>
    <property type="evidence" value="ECO:0007669"/>
    <property type="project" value="InterPro"/>
</dbReference>
<dbReference type="GO" id="GO:0046872">
    <property type="term" value="F:metal ion binding"/>
    <property type="evidence" value="ECO:0007669"/>
    <property type="project" value="UniProtKB-KW"/>
</dbReference>
<dbReference type="GO" id="GO:0006753">
    <property type="term" value="P:nucleoside phosphate metabolic process"/>
    <property type="evidence" value="ECO:0007669"/>
    <property type="project" value="TreeGrafter"/>
</dbReference>
<dbReference type="GO" id="GO:0019693">
    <property type="term" value="P:ribose phosphate metabolic process"/>
    <property type="evidence" value="ECO:0007669"/>
    <property type="project" value="TreeGrafter"/>
</dbReference>
<dbReference type="CDD" id="cd24157">
    <property type="entry name" value="NUDIX_GDPMK"/>
    <property type="match status" value="1"/>
</dbReference>
<dbReference type="FunFam" id="3.90.79.10:FF:000010">
    <property type="entry name" value="GDP-mannose pyrophosphatase NudK"/>
    <property type="match status" value="1"/>
</dbReference>
<dbReference type="Gene3D" id="3.90.79.10">
    <property type="entry name" value="Nucleoside Triphosphate Pyrophosphohydrolase"/>
    <property type="match status" value="1"/>
</dbReference>
<dbReference type="InterPro" id="IPR004385">
    <property type="entry name" value="NDP_pyrophosphatase"/>
</dbReference>
<dbReference type="InterPro" id="IPR015797">
    <property type="entry name" value="NUDIX_hydrolase-like_dom_sf"/>
</dbReference>
<dbReference type="InterPro" id="IPR000086">
    <property type="entry name" value="NUDIX_hydrolase_dom"/>
</dbReference>
<dbReference type="NCBIfam" id="TIGR00052">
    <property type="entry name" value="nudix-type nucleoside diphosphatase, YffH/AdpP family"/>
    <property type="match status" value="1"/>
</dbReference>
<dbReference type="NCBIfam" id="NF011585">
    <property type="entry name" value="PRK15009.1"/>
    <property type="match status" value="1"/>
</dbReference>
<dbReference type="PANTHER" id="PTHR11839:SF18">
    <property type="entry name" value="NUDIX HYDROLASE DOMAIN-CONTAINING PROTEIN"/>
    <property type="match status" value="1"/>
</dbReference>
<dbReference type="PANTHER" id="PTHR11839">
    <property type="entry name" value="UDP/ADP-SUGAR PYROPHOSPHATASE"/>
    <property type="match status" value="1"/>
</dbReference>
<dbReference type="Pfam" id="PF00293">
    <property type="entry name" value="NUDIX"/>
    <property type="match status" value="1"/>
</dbReference>
<dbReference type="SUPFAM" id="SSF55811">
    <property type="entry name" value="Nudix"/>
    <property type="match status" value="1"/>
</dbReference>
<dbReference type="PROSITE" id="PS51462">
    <property type="entry name" value="NUDIX"/>
    <property type="match status" value="1"/>
</dbReference>
<organism>
    <name type="scientific">Salmonella typhi</name>
    <dbReference type="NCBI Taxonomy" id="90370"/>
    <lineage>
        <taxon>Bacteria</taxon>
        <taxon>Pseudomonadati</taxon>
        <taxon>Pseudomonadota</taxon>
        <taxon>Gammaproteobacteria</taxon>
        <taxon>Enterobacterales</taxon>
        <taxon>Enterobacteriaceae</taxon>
        <taxon>Salmonella</taxon>
    </lineage>
</organism>
<sequence length="191" mass="21810">MSQTITLIKDKILSDNYFTLRNITYDLTRRNGEVIRHKREVYDRGNGATILLYNSTKKTVVLVRQFRVATWVNGNQDGMLIETCAGLLDNDEPEVCIRKEAIEETGYDVGEVRKIFELYMSPGGVTELIHFFIAEYHDSERASIGGGVEDEEIEVLELPFSRALEMVRSGEIRDGKTVLLLNYLQTSHLMD</sequence>
<proteinExistence type="inferred from homology"/>
<comment type="function">
    <text evidence="1">Nucleoside diphosphate sugar hydrolase that hydrolyzes GDP-mannose as its preferred substrate, yielding GMP and mannose-1-phosphate.</text>
</comment>
<comment type="catalytic activity">
    <reaction evidence="1">
        <text>GDP-alpha-D-mannose + H2O = alpha-D-mannose 1-phosphate + GMP + 2 H(+)</text>
        <dbReference type="Rhea" id="RHEA:27978"/>
        <dbReference type="ChEBI" id="CHEBI:15377"/>
        <dbReference type="ChEBI" id="CHEBI:15378"/>
        <dbReference type="ChEBI" id="CHEBI:57527"/>
        <dbReference type="ChEBI" id="CHEBI:58115"/>
        <dbReference type="ChEBI" id="CHEBI:58409"/>
    </reaction>
</comment>
<comment type="cofactor">
    <cofactor evidence="1">
        <name>Mg(2+)</name>
        <dbReference type="ChEBI" id="CHEBI:18420"/>
    </cofactor>
</comment>
<comment type="subunit">
    <text evidence="1">Homodimer.</text>
</comment>
<comment type="domain">
    <text evidence="1">In the dimer, the N-terminal domains are swapped between the two monomers, such that residues of both chains contribute to the active site.</text>
</comment>
<comment type="similarity">
    <text evidence="3">Belongs to the Nudix hydrolase family. NudK subfamily.</text>
</comment>
<evidence type="ECO:0000250" key="1">
    <source>
        <dbReference type="UniProtKB" id="P37128"/>
    </source>
</evidence>
<evidence type="ECO:0000255" key="2">
    <source>
        <dbReference type="PROSITE-ProRule" id="PRU00794"/>
    </source>
</evidence>
<evidence type="ECO:0000305" key="3"/>
<protein>
    <recommendedName>
        <fullName>GDP-mannose pyrophosphatase</fullName>
        <ecNumber evidence="1">3.6.1.-</ecNumber>
    </recommendedName>
    <alternativeName>
        <fullName>GDP-mannose hydrolase</fullName>
    </alternativeName>
    <alternativeName>
        <fullName>GDPMK</fullName>
    </alternativeName>
</protein>